<organism>
    <name type="scientific">Polistes lanio</name>
    <name type="common">Wasp</name>
    <dbReference type="NCBI Taxonomy" id="91419"/>
    <lineage>
        <taxon>Eukaryota</taxon>
        <taxon>Metazoa</taxon>
        <taxon>Ecdysozoa</taxon>
        <taxon>Arthropoda</taxon>
        <taxon>Hexapoda</taxon>
        <taxon>Insecta</taxon>
        <taxon>Pterygota</taxon>
        <taxon>Neoptera</taxon>
        <taxon>Endopterygota</taxon>
        <taxon>Hymenoptera</taxon>
        <taxon>Apocrita</taxon>
        <taxon>Aculeata</taxon>
        <taxon>Vespoidea</taxon>
        <taxon>Vespidae</taxon>
        <taxon>Polistinae</taxon>
        <taxon>Polistini</taxon>
        <taxon>Polistes</taxon>
    </lineage>
</organism>
<feature type="peptide" id="PRO_0000366095" description="Tachykinin-like peptide-I">
    <location>
        <begin position="1"/>
        <end position="14"/>
    </location>
</feature>
<feature type="modified residue" description="Methionine amide" evidence="1">
    <location>
        <position position="14"/>
    </location>
</feature>
<protein>
    <recommendedName>
        <fullName>Tachykinin-like peptide-I</fullName>
        <shortName>PllTkP-I</shortName>
    </recommendedName>
</protein>
<proteinExistence type="evidence at protein level"/>
<evidence type="ECO:0000269" key="1">
    <source>
    </source>
</evidence>
<keyword id="KW-0027">Amidation</keyword>
<keyword id="KW-0903">Direct protein sequencing</keyword>
<keyword id="KW-0964">Secreted</keyword>
<comment type="subcellular location">
    <subcellularLocation>
        <location>Secreted</location>
    </subcellularLocation>
</comment>
<comment type="tissue specificity">
    <text>Expressed by the venom gland.</text>
</comment>
<comment type="mass spectrometry"/>
<name>TLP1_POLLN</name>
<dbReference type="GO" id="GO:0005576">
    <property type="term" value="C:extracellular region"/>
    <property type="evidence" value="ECO:0007669"/>
    <property type="project" value="UniProtKB-SubCell"/>
</dbReference>
<sequence>QPPTPPEHRFPGLM</sequence>
<accession>P85879</accession>
<reference key="1">
    <citation type="journal article" date="2009" name="Toxicon">
        <title>Characterization of the mechanisms underlying the inflammatory response to Polistes lanio lanio (paper wasp) venom in mouse dorsal skin.</title>
        <authorList>
            <person name="Yshii L.M."/>
            <person name="Souza G.H.M.F."/>
            <person name="Camargo E.A."/>
            <person name="Eberlin M.N."/>
            <person name="Ribela M.T.C.P."/>
            <person name="Muscara M.N."/>
            <person name="Hyslop S."/>
            <person name="Costa S.K.P."/>
        </authorList>
    </citation>
    <scope>PROTEIN SEQUENCE</scope>
    <scope>MASS SPECTROMETRY</scope>
    <scope>AMIDATION AT MET-14</scope>
    <source>
        <strain>Subsp. lanio</strain>
        <tissue>Venom</tissue>
    </source>
</reference>